<dbReference type="EMBL" id="AY653733">
    <property type="protein sequence ID" value="AAV50294.1"/>
    <property type="molecule type" value="Genomic_DNA"/>
</dbReference>
<dbReference type="KEGG" id="vg:9924596"/>
<dbReference type="OrthoDB" id="25614at10239"/>
<dbReference type="Proteomes" id="UP000001134">
    <property type="component" value="Genome"/>
</dbReference>
<accession>Q5UP91</accession>
<organism>
    <name type="scientific">Acanthamoeba polyphaga mimivirus</name>
    <name type="common">APMV</name>
    <dbReference type="NCBI Taxonomy" id="212035"/>
    <lineage>
        <taxon>Viruses</taxon>
        <taxon>Varidnaviria</taxon>
        <taxon>Bamfordvirae</taxon>
        <taxon>Nucleocytoviricota</taxon>
        <taxon>Megaviricetes</taxon>
        <taxon>Imitervirales</taxon>
        <taxon>Mimiviridae</taxon>
        <taxon>Megamimivirinae</taxon>
        <taxon>Mimivirus</taxon>
        <taxon>Mimivirus bradfordmassiliense</taxon>
    </lineage>
</organism>
<sequence length="123" mass="14540">MTKLIVLSRVSMNEPTKETSFEYVLSDKKSLKNKINKLKKRVFDENIEEFNEINEIDGVNSICPYINRDTYYDPDFKKYTKIVKNFSLMDDTFLIEQHTSYSFAYSISVVDLVKDNTLVLYEH</sequence>
<gene>
    <name type="ordered locus">MIMI_L19</name>
</gene>
<organismHost>
    <name type="scientific">Acanthamoeba polyphaga</name>
    <name type="common">Amoeba</name>
    <dbReference type="NCBI Taxonomy" id="5757"/>
</organismHost>
<feature type="chain" id="PRO_0000071181" description="Uncharacterized protein L19">
    <location>
        <begin position="1"/>
        <end position="123"/>
    </location>
</feature>
<protein>
    <recommendedName>
        <fullName>Uncharacterized protein L19</fullName>
    </recommendedName>
</protein>
<reference key="1">
    <citation type="journal article" date="2004" name="Science">
        <title>The 1.2-megabase genome sequence of Mimivirus.</title>
        <authorList>
            <person name="Raoult D."/>
            <person name="Audic S."/>
            <person name="Robert C."/>
            <person name="Abergel C."/>
            <person name="Renesto P."/>
            <person name="Ogata H."/>
            <person name="La Scola B."/>
            <person name="Susan M."/>
            <person name="Claverie J.-M."/>
        </authorList>
    </citation>
    <scope>NUCLEOTIDE SEQUENCE [LARGE SCALE GENOMIC DNA]</scope>
    <source>
        <strain>Rowbotham-Bradford</strain>
    </source>
</reference>
<keyword id="KW-1185">Reference proteome</keyword>
<name>YL019_MIMIV</name>
<proteinExistence type="predicted"/>